<organism>
    <name type="scientific">Nitrosococcus oceani (strain ATCC 19707 / BCRC 17464 / JCM 30415 / NCIMB 11848 / C-107)</name>
    <dbReference type="NCBI Taxonomy" id="323261"/>
    <lineage>
        <taxon>Bacteria</taxon>
        <taxon>Pseudomonadati</taxon>
        <taxon>Pseudomonadota</taxon>
        <taxon>Gammaproteobacteria</taxon>
        <taxon>Chromatiales</taxon>
        <taxon>Chromatiaceae</taxon>
        <taxon>Nitrosococcus</taxon>
    </lineage>
</organism>
<comment type="function">
    <text evidence="1">NDH-1 shuttles electrons from NADH, via FMN and iron-sulfur (Fe-S) centers, to quinones in the respiratory chain. The immediate electron acceptor for the enzyme in this species is believed to be ubiquinone. Couples the redox reaction to proton translocation (for every two electrons transferred, four hydrogen ions are translocated across the cytoplasmic membrane), and thus conserves the redox energy in a proton gradient.</text>
</comment>
<comment type="catalytic activity">
    <reaction evidence="1">
        <text>a quinone + NADH + 5 H(+)(in) = a quinol + NAD(+) + 4 H(+)(out)</text>
        <dbReference type="Rhea" id="RHEA:57888"/>
        <dbReference type="ChEBI" id="CHEBI:15378"/>
        <dbReference type="ChEBI" id="CHEBI:24646"/>
        <dbReference type="ChEBI" id="CHEBI:57540"/>
        <dbReference type="ChEBI" id="CHEBI:57945"/>
        <dbReference type="ChEBI" id="CHEBI:132124"/>
    </reaction>
</comment>
<comment type="subunit">
    <text evidence="1">NDH-1 is composed of 14 different subunits. Subunits NuoB, C, D, E, F, and G constitute the peripheral sector of the complex.</text>
</comment>
<comment type="subcellular location">
    <subcellularLocation>
        <location evidence="1">Cell inner membrane</location>
        <topology evidence="1">Peripheral membrane protein</topology>
        <orientation evidence="1">Cytoplasmic side</orientation>
    </subcellularLocation>
</comment>
<comment type="similarity">
    <text evidence="1">Belongs to the complex I 49 kDa subunit family.</text>
</comment>
<sequence>MAEIRNFTLNFGPQHPAAHGVLRLVLEMDGEIIQRADPHVGLLHRATEKLAESKPFNQSIGYMDRLDYVSMMCNEHGYVKAIETLLGIEPPLRAQYIRTMFDEITRILNHLMWLGAHGLDIGAMTVFLYCFREREDLMDCYEAVSGARMHATYYRPGGVYRDLPETMPGYQPSKWHNEKEVAIINRNREGSLLDFIEDFTARFPTCVDEYETLLTDNRIWKQRTVGIGVVTPERALQLGFTGPMLRGSGVEWDLRKKQPYAAYDQIDFDIPVGVNGDCYDRYLVRIEEMRQSNQIIKQCVDWLRKNPGPVIVNNYKVAAPPREKMKNDMEVLIHHFKLFTEGYCVPEGEAYAAVEAPKGEFGVYLISDGANKPYRLKVRAPGFAHLAAMDEMVQGHMLADVVAIIGTMDIVFGEIDR</sequence>
<dbReference type="EC" id="7.1.1.-" evidence="1"/>
<dbReference type="EMBL" id="CP000127">
    <property type="protein sequence ID" value="ABA59015.1"/>
    <property type="molecule type" value="Genomic_DNA"/>
</dbReference>
<dbReference type="RefSeq" id="WP_004164040.1">
    <property type="nucleotide sequence ID" value="NC_007484.1"/>
</dbReference>
<dbReference type="SMR" id="Q3J831"/>
<dbReference type="STRING" id="323261.Noc_2562"/>
<dbReference type="KEGG" id="noc:Noc_2562"/>
<dbReference type="eggNOG" id="COG0649">
    <property type="taxonomic scope" value="Bacteria"/>
</dbReference>
<dbReference type="HOGENOM" id="CLU_015134_1_1_6"/>
<dbReference type="InParanoid" id="Q3J831"/>
<dbReference type="Proteomes" id="UP000006838">
    <property type="component" value="Chromosome"/>
</dbReference>
<dbReference type="GO" id="GO:0005886">
    <property type="term" value="C:plasma membrane"/>
    <property type="evidence" value="ECO:0007669"/>
    <property type="project" value="UniProtKB-SubCell"/>
</dbReference>
<dbReference type="GO" id="GO:0051287">
    <property type="term" value="F:NAD binding"/>
    <property type="evidence" value="ECO:0007669"/>
    <property type="project" value="InterPro"/>
</dbReference>
<dbReference type="GO" id="GO:0050136">
    <property type="term" value="F:NADH:ubiquinone reductase (non-electrogenic) activity"/>
    <property type="evidence" value="ECO:0007669"/>
    <property type="project" value="UniProtKB-UniRule"/>
</dbReference>
<dbReference type="GO" id="GO:0048038">
    <property type="term" value="F:quinone binding"/>
    <property type="evidence" value="ECO:0007669"/>
    <property type="project" value="UniProtKB-KW"/>
</dbReference>
<dbReference type="FunFam" id="1.10.645.10:FF:000005">
    <property type="entry name" value="NADH-quinone oxidoreductase subunit D"/>
    <property type="match status" value="1"/>
</dbReference>
<dbReference type="Gene3D" id="1.10.645.10">
    <property type="entry name" value="Cytochrome-c3 Hydrogenase, chain B"/>
    <property type="match status" value="1"/>
</dbReference>
<dbReference type="HAMAP" id="MF_01358">
    <property type="entry name" value="NDH1_NuoD"/>
    <property type="match status" value="1"/>
</dbReference>
<dbReference type="InterPro" id="IPR001135">
    <property type="entry name" value="NADH_Q_OxRdtase_suD"/>
</dbReference>
<dbReference type="InterPro" id="IPR014029">
    <property type="entry name" value="NADH_UbQ_OxRdtase_49kDa_CS"/>
</dbReference>
<dbReference type="InterPro" id="IPR022885">
    <property type="entry name" value="NDH1_su_D/H"/>
</dbReference>
<dbReference type="InterPro" id="IPR029014">
    <property type="entry name" value="NiFe-Hase_large"/>
</dbReference>
<dbReference type="NCBIfam" id="TIGR01962">
    <property type="entry name" value="NuoD"/>
    <property type="match status" value="1"/>
</dbReference>
<dbReference type="NCBIfam" id="NF004739">
    <property type="entry name" value="PRK06075.1"/>
    <property type="match status" value="1"/>
</dbReference>
<dbReference type="PANTHER" id="PTHR11993:SF10">
    <property type="entry name" value="NADH DEHYDROGENASE [UBIQUINONE] IRON-SULFUR PROTEIN 2, MITOCHONDRIAL"/>
    <property type="match status" value="1"/>
</dbReference>
<dbReference type="PANTHER" id="PTHR11993">
    <property type="entry name" value="NADH-UBIQUINONE OXIDOREDUCTASE 49 KDA SUBUNIT"/>
    <property type="match status" value="1"/>
</dbReference>
<dbReference type="Pfam" id="PF00346">
    <property type="entry name" value="Complex1_49kDa"/>
    <property type="match status" value="1"/>
</dbReference>
<dbReference type="SUPFAM" id="SSF56762">
    <property type="entry name" value="HydB/Nqo4-like"/>
    <property type="match status" value="1"/>
</dbReference>
<dbReference type="PROSITE" id="PS00535">
    <property type="entry name" value="COMPLEX1_49K"/>
    <property type="match status" value="1"/>
</dbReference>
<protein>
    <recommendedName>
        <fullName evidence="1">NADH-quinone oxidoreductase subunit D</fullName>
        <ecNumber evidence="1">7.1.1.-</ecNumber>
    </recommendedName>
    <alternativeName>
        <fullName evidence="1">NADH dehydrogenase I subunit D</fullName>
    </alternativeName>
    <alternativeName>
        <fullName evidence="1">NDH-1 subunit D</fullName>
    </alternativeName>
</protein>
<reference key="1">
    <citation type="journal article" date="2006" name="Appl. Environ. Microbiol.">
        <title>Complete genome sequence of the marine, chemolithoautotrophic, ammonia-oxidizing bacterium Nitrosococcus oceani ATCC 19707.</title>
        <authorList>
            <person name="Klotz M.G."/>
            <person name="Arp D.J."/>
            <person name="Chain P.S.G."/>
            <person name="El-Sheikh A.F."/>
            <person name="Hauser L.J."/>
            <person name="Hommes N.G."/>
            <person name="Larimer F.W."/>
            <person name="Malfatti S.A."/>
            <person name="Norton J.M."/>
            <person name="Poret-Peterson A.T."/>
            <person name="Vergez L.M."/>
            <person name="Ward B.B."/>
        </authorList>
    </citation>
    <scope>NUCLEOTIDE SEQUENCE [LARGE SCALE GENOMIC DNA]</scope>
    <source>
        <strain>ATCC 19707 / BCRC 17464 / JCM 30415 / NCIMB 11848 / C-107</strain>
    </source>
</reference>
<feature type="chain" id="PRO_0000371893" description="NADH-quinone oxidoreductase subunit D">
    <location>
        <begin position="1"/>
        <end position="417"/>
    </location>
</feature>
<accession>Q3J831</accession>
<name>NUOD_NITOC</name>
<proteinExistence type="inferred from homology"/>
<gene>
    <name evidence="1" type="primary">nuoD</name>
    <name type="ordered locus">Noc_2562</name>
</gene>
<evidence type="ECO:0000255" key="1">
    <source>
        <dbReference type="HAMAP-Rule" id="MF_01358"/>
    </source>
</evidence>
<keyword id="KW-0997">Cell inner membrane</keyword>
<keyword id="KW-1003">Cell membrane</keyword>
<keyword id="KW-0472">Membrane</keyword>
<keyword id="KW-0520">NAD</keyword>
<keyword id="KW-0874">Quinone</keyword>
<keyword id="KW-1185">Reference proteome</keyword>
<keyword id="KW-1278">Translocase</keyword>
<keyword id="KW-0813">Transport</keyword>
<keyword id="KW-0830">Ubiquinone</keyword>